<feature type="chain" id="PRO_0000084983" description="Catalase">
    <location>
        <begin position="1"/>
        <end position="474"/>
    </location>
</feature>
<feature type="active site" evidence="1">
    <location>
        <position position="52"/>
    </location>
</feature>
<feature type="active site" evidence="1">
    <location>
        <position position="124"/>
    </location>
</feature>
<feature type="binding site" description="axial binding residue" evidence="1">
    <location>
        <position position="334"/>
    </location>
    <ligand>
        <name>heme</name>
        <dbReference type="ChEBI" id="CHEBI:30413"/>
    </ligand>
    <ligandPart>
        <name>Fe</name>
        <dbReference type="ChEBI" id="CHEBI:18248"/>
    </ligandPart>
</feature>
<feature type="sequence conflict" description="In Ref. 1; CAA59444." evidence="2" ref="1">
    <original>A</original>
    <variation>T</variation>
    <location>
        <position position="23"/>
    </location>
</feature>
<feature type="sequence conflict" description="In Ref. 1; CAA59444." evidence="2" ref="1">
    <original>V</original>
    <variation>I</variation>
    <location>
        <position position="82"/>
    </location>
</feature>
<feature type="sequence conflict" description="In Ref. 1; CAA59444." evidence="2" ref="1">
    <original>S</original>
    <variation>R</variation>
    <location>
        <position position="177"/>
    </location>
</feature>
<feature type="sequence conflict" description="In Ref. 1; CAA59444." evidence="2" ref="1">
    <original>F</original>
    <variation>L</variation>
    <location>
        <position position="283"/>
    </location>
</feature>
<feature type="sequence conflict" description="In Ref. 1; CAA59444." evidence="2" ref="1">
    <original>A</original>
    <variation>T</variation>
    <location>
        <position position="440"/>
    </location>
</feature>
<feature type="sequence conflict" description="In Ref. 1; CAA59444." evidence="2" ref="1">
    <original>K</original>
    <variation>E</variation>
    <location>
        <position position="455"/>
    </location>
</feature>
<feature type="sequence conflict" description="In Ref. 1; CAA59444." evidence="2" ref="1">
    <original>LEK</original>
    <variation>FPIVSRIRAWRNHGHRCFLCEIVIRSQFHTTYEPEA</variation>
    <location>
        <begin position="472"/>
        <end position="474"/>
    </location>
</feature>
<protein>
    <recommendedName>
        <fullName>Catalase</fullName>
        <ecNumber>1.11.1.6</ecNumber>
    </recommendedName>
</protein>
<organism>
    <name type="scientific">Campylobacter jejuni subsp. jejuni serotype O:2 (strain ATCC 700819 / NCTC 11168)</name>
    <dbReference type="NCBI Taxonomy" id="192222"/>
    <lineage>
        <taxon>Bacteria</taxon>
        <taxon>Pseudomonadati</taxon>
        <taxon>Campylobacterota</taxon>
        <taxon>Epsilonproteobacteria</taxon>
        <taxon>Campylobacterales</taxon>
        <taxon>Campylobacteraceae</taxon>
        <taxon>Campylobacter</taxon>
    </lineage>
</organism>
<dbReference type="EC" id="1.11.1.6"/>
<dbReference type="EMBL" id="X85130">
    <property type="protein sequence ID" value="CAA59444.1"/>
    <property type="molecule type" value="Genomic_DNA"/>
</dbReference>
<dbReference type="EMBL" id="AL111168">
    <property type="protein sequence ID" value="CAL35497.1"/>
    <property type="molecule type" value="Genomic_DNA"/>
</dbReference>
<dbReference type="PIR" id="F81283">
    <property type="entry name" value="F81283"/>
</dbReference>
<dbReference type="PIR" id="I40767">
    <property type="entry name" value="I40767"/>
</dbReference>
<dbReference type="RefSeq" id="WP_002856117.1">
    <property type="nucleotide sequence ID" value="NZ_SZUC01000003.1"/>
</dbReference>
<dbReference type="RefSeq" id="YP_002344773.1">
    <property type="nucleotide sequence ID" value="NC_002163.1"/>
</dbReference>
<dbReference type="SMR" id="Q59296"/>
<dbReference type="IntAct" id="Q59296">
    <property type="interactions" value="37"/>
</dbReference>
<dbReference type="STRING" id="192222.Cj1385"/>
<dbReference type="PeroxiBase" id="5383">
    <property type="entry name" value="CjejKat01"/>
</dbReference>
<dbReference type="PaxDb" id="192222-Cj1385"/>
<dbReference type="EnsemblBacteria" id="CAL35497">
    <property type="protein sequence ID" value="CAL35497"/>
    <property type="gene ID" value="Cj1385"/>
</dbReference>
<dbReference type="GeneID" id="905678"/>
<dbReference type="KEGG" id="cje:Cj1385"/>
<dbReference type="PATRIC" id="fig|192222.6.peg.1366"/>
<dbReference type="eggNOG" id="COG0753">
    <property type="taxonomic scope" value="Bacteria"/>
</dbReference>
<dbReference type="HOGENOM" id="CLU_010645_2_0_7"/>
<dbReference type="OrthoDB" id="3169619at2"/>
<dbReference type="Proteomes" id="UP000000799">
    <property type="component" value="Chromosome"/>
</dbReference>
<dbReference type="GO" id="GO:0005737">
    <property type="term" value="C:cytoplasm"/>
    <property type="evidence" value="ECO:0007669"/>
    <property type="project" value="TreeGrafter"/>
</dbReference>
<dbReference type="GO" id="GO:0004096">
    <property type="term" value="F:catalase activity"/>
    <property type="evidence" value="ECO:0007669"/>
    <property type="project" value="UniProtKB-EC"/>
</dbReference>
<dbReference type="GO" id="GO:0020037">
    <property type="term" value="F:heme binding"/>
    <property type="evidence" value="ECO:0007669"/>
    <property type="project" value="InterPro"/>
</dbReference>
<dbReference type="GO" id="GO:0046872">
    <property type="term" value="F:metal ion binding"/>
    <property type="evidence" value="ECO:0007669"/>
    <property type="project" value="UniProtKB-KW"/>
</dbReference>
<dbReference type="GO" id="GO:0042744">
    <property type="term" value="P:hydrogen peroxide catabolic process"/>
    <property type="evidence" value="ECO:0007669"/>
    <property type="project" value="UniProtKB-KW"/>
</dbReference>
<dbReference type="GO" id="GO:0042542">
    <property type="term" value="P:response to hydrogen peroxide"/>
    <property type="evidence" value="ECO:0007669"/>
    <property type="project" value="TreeGrafter"/>
</dbReference>
<dbReference type="CDD" id="cd08156">
    <property type="entry name" value="catalase_clade_3"/>
    <property type="match status" value="1"/>
</dbReference>
<dbReference type="FunFam" id="2.40.180.10:FF:000001">
    <property type="entry name" value="Catalase"/>
    <property type="match status" value="1"/>
</dbReference>
<dbReference type="Gene3D" id="2.40.180.10">
    <property type="entry name" value="Catalase core domain"/>
    <property type="match status" value="1"/>
</dbReference>
<dbReference type="InterPro" id="IPR018028">
    <property type="entry name" value="Catalase"/>
</dbReference>
<dbReference type="InterPro" id="IPR040333">
    <property type="entry name" value="Catalase_3"/>
</dbReference>
<dbReference type="InterPro" id="IPR024711">
    <property type="entry name" value="Catalase_clade1/3"/>
</dbReference>
<dbReference type="InterPro" id="IPR011614">
    <property type="entry name" value="Catalase_core"/>
</dbReference>
<dbReference type="InterPro" id="IPR002226">
    <property type="entry name" value="Catalase_haem_BS"/>
</dbReference>
<dbReference type="InterPro" id="IPR010582">
    <property type="entry name" value="Catalase_immune_responsive"/>
</dbReference>
<dbReference type="InterPro" id="IPR020835">
    <property type="entry name" value="Catalase_sf"/>
</dbReference>
<dbReference type="PANTHER" id="PTHR11465">
    <property type="entry name" value="CATALASE"/>
    <property type="match status" value="1"/>
</dbReference>
<dbReference type="PANTHER" id="PTHR11465:SF61">
    <property type="entry name" value="CATALASE"/>
    <property type="match status" value="1"/>
</dbReference>
<dbReference type="Pfam" id="PF00199">
    <property type="entry name" value="Catalase"/>
    <property type="match status" value="1"/>
</dbReference>
<dbReference type="Pfam" id="PF06628">
    <property type="entry name" value="Catalase-rel"/>
    <property type="match status" value="1"/>
</dbReference>
<dbReference type="PIRSF" id="PIRSF038928">
    <property type="entry name" value="Catalase_clade1-3"/>
    <property type="match status" value="1"/>
</dbReference>
<dbReference type="PRINTS" id="PR00067">
    <property type="entry name" value="CATALASE"/>
</dbReference>
<dbReference type="SMART" id="SM01060">
    <property type="entry name" value="Catalase"/>
    <property type="match status" value="1"/>
</dbReference>
<dbReference type="SUPFAM" id="SSF56634">
    <property type="entry name" value="Heme-dependent catalase-like"/>
    <property type="match status" value="1"/>
</dbReference>
<dbReference type="PROSITE" id="PS00437">
    <property type="entry name" value="CATALASE_1"/>
    <property type="match status" value="1"/>
</dbReference>
<dbReference type="PROSITE" id="PS51402">
    <property type="entry name" value="CATALASE_3"/>
    <property type="match status" value="1"/>
</dbReference>
<name>CATA_CAMJE</name>
<sequence>MKKLTNDFGNIIADNQNSLSAGAKGPLLMQDYLLLEKLAHQNRERIPERTVHAKGSGAYGEIKITADLSAYTKAKIFQKGEVTPLFLRFSTVAGEAGAADAERDVRGFAIKFYTKEGNWDLVGNNTPTFFIRDAYKFPDFIHTQKRDPRTHLRSNNAAWDFWSLCPESLHQVTILMSDRGIPASYRHMHGFGSHTYSFINDKNERFWVKFHFKTQQGIKNLTNQEAAELIAKDRESHQRDLYNAIENKDFPKWKVQVQILAEKDIEKLGFNPFDLTKIWPHSFVPLMDIGEMILNKNPQNYFNEVEQAAFSPSNIVPGIGFSPDKMLQARIFSYPDAQRYRIGTNYHLLPVNRAKSEVNTYNVAGAMNFDSYKNDAAYYEPNSYDNSPKEDKSYLEPDLVLEGVAQRYAPLDNDFYTQPRALFNLMNDDQKTQLFHNIAASMEGVDEKIITRALKHFEKISPDYAKGIKKALEK</sequence>
<reference key="1">
    <citation type="journal article" date="1995" name="Microbiology">
        <title>Molecular characterization of katA from Campylobacter jejuni and generation of a catalase-deficient mutant of Campylobacter coli by interspecific allelic exchange.</title>
        <authorList>
            <person name="Grant K.A."/>
            <person name="Park S.F."/>
        </authorList>
    </citation>
    <scope>NUCLEOTIDE SEQUENCE [GENOMIC DNA]</scope>
    <source>
        <strain>ATCC 33560 / CIP 702 / DSM 4688 / NCTC 11351</strain>
    </source>
</reference>
<reference key="2">
    <citation type="journal article" date="2000" name="Nature">
        <title>The genome sequence of the food-borne pathogen Campylobacter jejuni reveals hypervariable sequences.</title>
        <authorList>
            <person name="Parkhill J."/>
            <person name="Wren B.W."/>
            <person name="Mungall K.L."/>
            <person name="Ketley J.M."/>
            <person name="Churcher C.M."/>
            <person name="Basham D."/>
            <person name="Chillingworth T."/>
            <person name="Davies R.M."/>
            <person name="Feltwell T."/>
            <person name="Holroyd S."/>
            <person name="Jagels K."/>
            <person name="Karlyshev A.V."/>
            <person name="Moule S."/>
            <person name="Pallen M.J."/>
            <person name="Penn C.W."/>
            <person name="Quail M.A."/>
            <person name="Rajandream M.A."/>
            <person name="Rutherford K.M."/>
            <person name="van Vliet A.H.M."/>
            <person name="Whitehead S."/>
            <person name="Barrell B.G."/>
        </authorList>
    </citation>
    <scope>NUCLEOTIDE SEQUENCE [LARGE SCALE GENOMIC DNA]</scope>
    <source>
        <strain>ATCC 700819 / NCTC 11168</strain>
    </source>
</reference>
<gene>
    <name type="primary">katA</name>
    <name type="ordered locus">Cj1385</name>
</gene>
<keyword id="KW-0349">Heme</keyword>
<keyword id="KW-0376">Hydrogen peroxide</keyword>
<keyword id="KW-0408">Iron</keyword>
<keyword id="KW-0479">Metal-binding</keyword>
<keyword id="KW-0560">Oxidoreductase</keyword>
<keyword id="KW-0575">Peroxidase</keyword>
<keyword id="KW-1185">Reference proteome</keyword>
<proteinExistence type="inferred from homology"/>
<comment type="function">
    <text>Decomposes hydrogen peroxide into water and oxygen; serves to protect cells from the toxic effects of hydrogen peroxide.</text>
</comment>
<comment type="catalytic activity">
    <reaction>
        <text>2 H2O2 = O2 + 2 H2O</text>
        <dbReference type="Rhea" id="RHEA:20309"/>
        <dbReference type="ChEBI" id="CHEBI:15377"/>
        <dbReference type="ChEBI" id="CHEBI:15379"/>
        <dbReference type="ChEBI" id="CHEBI:16240"/>
        <dbReference type="EC" id="1.11.1.6"/>
    </reaction>
</comment>
<comment type="cofactor">
    <cofactor>
        <name>heme</name>
        <dbReference type="ChEBI" id="CHEBI:30413"/>
    </cofactor>
</comment>
<comment type="similarity">
    <text evidence="2">Belongs to the catalase family.</text>
</comment>
<accession>Q59296</accession>
<accession>Q0P8M4</accession>
<evidence type="ECO:0000250" key="1"/>
<evidence type="ECO:0000305" key="2"/>